<name>YIDC_TOLAT</name>
<accession>C4LDZ4</accession>
<proteinExistence type="inferred from homology"/>
<protein>
    <recommendedName>
        <fullName evidence="1">Membrane protein insertase YidC</fullName>
    </recommendedName>
    <alternativeName>
        <fullName evidence="1">Foldase YidC</fullName>
    </alternativeName>
    <alternativeName>
        <fullName evidence="1">Membrane integrase YidC</fullName>
    </alternativeName>
    <alternativeName>
        <fullName evidence="1">Membrane protein YidC</fullName>
    </alternativeName>
</protein>
<sequence>MQPQRNLLLIGLLLVSFMLWQSWMVDKAPKTATPATAESSVPASSGGDVPNQNDASNAKHALLTLRSDVLELTVDTLGGDIVEAKLLKQTEAQGSDKPFVLLEKKPQRQYIAQSGLIGRDGVDNQAERPVYTANGTEFALVEGKDELVVPMTFTDAKGNVFTKRFVLKRESYAVGVDYQVKNVSAQPLEIQFYGQLKQTIAAPEGSSTPGMMASAFHGAAYSSAEQRYEKVNFSDIGETKLDVATQAGWAGMLQHYFVTAWTGKADAQNHIYGKAVSVNADVKDSGEAIIGIKLPLTTIAANSEAVVGTSLWIGPKLQDQMAAVAQHLDLTVDYGYLWFIAQPLFQLLQFLHGLVGNWGVAIILITMIVRGVMYPLSKAQYTSMAKMRLLQPKLTALRERLGDDRQKMSQAMMELYKEEKVNPLGGCFPLLIQMPIFIALYWTLMESVELRHAPFALWLTDLSVKDPYYVLPLLMGATMWYIQKMSPTTVTDPMQQKVMQFMPIVFTFMFLWFPSGLTLYWVVSNIVTIIQQTLIFRQLEKKGLHSRKK</sequence>
<gene>
    <name evidence="1" type="primary">yidC</name>
    <name type="ordered locus">Tola_3167</name>
</gene>
<comment type="function">
    <text evidence="1">Required for the insertion and/or proper folding and/or complex formation of integral membrane proteins into the membrane. Involved in integration of membrane proteins that insert both dependently and independently of the Sec translocase complex, as well as at least some lipoproteins. Aids folding of multispanning membrane proteins.</text>
</comment>
<comment type="subunit">
    <text evidence="1">Interacts with the Sec translocase complex via SecD. Specifically interacts with transmembrane segments of nascent integral membrane proteins during membrane integration.</text>
</comment>
<comment type="subcellular location">
    <subcellularLocation>
        <location evidence="1">Cell inner membrane</location>
        <topology evidence="1">Multi-pass membrane protein</topology>
    </subcellularLocation>
</comment>
<comment type="similarity">
    <text evidence="1">Belongs to the OXA1/ALB3/YidC family. Type 1 subfamily.</text>
</comment>
<feature type="chain" id="PRO_1000215979" description="Membrane protein insertase YidC">
    <location>
        <begin position="1"/>
        <end position="549"/>
    </location>
</feature>
<feature type="transmembrane region" description="Helical" evidence="1">
    <location>
        <begin position="6"/>
        <end position="26"/>
    </location>
</feature>
<feature type="transmembrane region" description="Helical" evidence="1">
    <location>
        <begin position="349"/>
        <end position="369"/>
    </location>
</feature>
<feature type="transmembrane region" description="Helical" evidence="1">
    <location>
        <begin position="424"/>
        <end position="444"/>
    </location>
</feature>
<feature type="transmembrane region" description="Helical" evidence="1">
    <location>
        <begin position="462"/>
        <end position="482"/>
    </location>
</feature>
<feature type="transmembrane region" description="Helical" evidence="1">
    <location>
        <begin position="503"/>
        <end position="523"/>
    </location>
</feature>
<feature type="region of interest" description="Disordered" evidence="2">
    <location>
        <begin position="35"/>
        <end position="55"/>
    </location>
</feature>
<organism>
    <name type="scientific">Tolumonas auensis (strain DSM 9187 / NBRC 110442 / TA 4)</name>
    <dbReference type="NCBI Taxonomy" id="595494"/>
    <lineage>
        <taxon>Bacteria</taxon>
        <taxon>Pseudomonadati</taxon>
        <taxon>Pseudomonadota</taxon>
        <taxon>Gammaproteobacteria</taxon>
        <taxon>Aeromonadales</taxon>
        <taxon>Aeromonadaceae</taxon>
        <taxon>Tolumonas</taxon>
    </lineage>
</organism>
<evidence type="ECO:0000255" key="1">
    <source>
        <dbReference type="HAMAP-Rule" id="MF_01810"/>
    </source>
</evidence>
<evidence type="ECO:0000256" key="2">
    <source>
        <dbReference type="SAM" id="MobiDB-lite"/>
    </source>
</evidence>
<dbReference type="EMBL" id="CP001616">
    <property type="protein sequence ID" value="ACQ94755.1"/>
    <property type="molecule type" value="Genomic_DNA"/>
</dbReference>
<dbReference type="RefSeq" id="WP_015880204.1">
    <property type="nucleotide sequence ID" value="NC_012691.1"/>
</dbReference>
<dbReference type="SMR" id="C4LDZ4"/>
<dbReference type="STRING" id="595494.Tola_3167"/>
<dbReference type="KEGG" id="tau:Tola_3167"/>
<dbReference type="eggNOG" id="COG0706">
    <property type="taxonomic scope" value="Bacteria"/>
</dbReference>
<dbReference type="HOGENOM" id="CLU_016535_3_0_6"/>
<dbReference type="OrthoDB" id="9780552at2"/>
<dbReference type="Proteomes" id="UP000009073">
    <property type="component" value="Chromosome"/>
</dbReference>
<dbReference type="GO" id="GO:0005886">
    <property type="term" value="C:plasma membrane"/>
    <property type="evidence" value="ECO:0007669"/>
    <property type="project" value="UniProtKB-SubCell"/>
</dbReference>
<dbReference type="GO" id="GO:0032977">
    <property type="term" value="F:membrane insertase activity"/>
    <property type="evidence" value="ECO:0007669"/>
    <property type="project" value="InterPro"/>
</dbReference>
<dbReference type="GO" id="GO:0051205">
    <property type="term" value="P:protein insertion into membrane"/>
    <property type="evidence" value="ECO:0007669"/>
    <property type="project" value="TreeGrafter"/>
</dbReference>
<dbReference type="GO" id="GO:0015031">
    <property type="term" value="P:protein transport"/>
    <property type="evidence" value="ECO:0007669"/>
    <property type="project" value="UniProtKB-KW"/>
</dbReference>
<dbReference type="CDD" id="cd20070">
    <property type="entry name" value="5TM_YidC_Alb3"/>
    <property type="match status" value="1"/>
</dbReference>
<dbReference type="CDD" id="cd19961">
    <property type="entry name" value="EcYidC-like_peri"/>
    <property type="match status" value="1"/>
</dbReference>
<dbReference type="Gene3D" id="2.70.98.90">
    <property type="match status" value="1"/>
</dbReference>
<dbReference type="HAMAP" id="MF_01810">
    <property type="entry name" value="YidC_type1"/>
    <property type="match status" value="1"/>
</dbReference>
<dbReference type="InterPro" id="IPR019998">
    <property type="entry name" value="Membr_insert_YidC"/>
</dbReference>
<dbReference type="InterPro" id="IPR028053">
    <property type="entry name" value="Membr_insert_YidC_N"/>
</dbReference>
<dbReference type="InterPro" id="IPR001708">
    <property type="entry name" value="YidC/ALB3/OXA1/COX18"/>
</dbReference>
<dbReference type="InterPro" id="IPR028055">
    <property type="entry name" value="YidC/Oxa/ALB_C"/>
</dbReference>
<dbReference type="InterPro" id="IPR047196">
    <property type="entry name" value="YidC_ALB_C"/>
</dbReference>
<dbReference type="InterPro" id="IPR038221">
    <property type="entry name" value="YidC_periplasmic_sf"/>
</dbReference>
<dbReference type="NCBIfam" id="NF002351">
    <property type="entry name" value="PRK01318.1-1"/>
    <property type="match status" value="1"/>
</dbReference>
<dbReference type="NCBIfam" id="NF002352">
    <property type="entry name" value="PRK01318.1-3"/>
    <property type="match status" value="1"/>
</dbReference>
<dbReference type="NCBIfam" id="TIGR03593">
    <property type="entry name" value="yidC_nterm"/>
    <property type="match status" value="1"/>
</dbReference>
<dbReference type="NCBIfam" id="TIGR03592">
    <property type="entry name" value="yidC_oxa1_cterm"/>
    <property type="match status" value="1"/>
</dbReference>
<dbReference type="PANTHER" id="PTHR12428:SF65">
    <property type="entry name" value="CYTOCHROME C OXIDASE ASSEMBLY PROTEIN COX18, MITOCHONDRIAL"/>
    <property type="match status" value="1"/>
</dbReference>
<dbReference type="PANTHER" id="PTHR12428">
    <property type="entry name" value="OXA1"/>
    <property type="match status" value="1"/>
</dbReference>
<dbReference type="Pfam" id="PF02096">
    <property type="entry name" value="60KD_IMP"/>
    <property type="match status" value="1"/>
</dbReference>
<dbReference type="Pfam" id="PF14849">
    <property type="entry name" value="YidC_periplas"/>
    <property type="match status" value="1"/>
</dbReference>
<dbReference type="PRINTS" id="PR00701">
    <property type="entry name" value="60KDINNERMP"/>
</dbReference>
<dbReference type="PRINTS" id="PR01900">
    <property type="entry name" value="YIDCPROTEIN"/>
</dbReference>
<reference key="1">
    <citation type="submission" date="2009-05" db="EMBL/GenBank/DDBJ databases">
        <title>Complete sequence of Tolumonas auensis DSM 9187.</title>
        <authorList>
            <consortium name="US DOE Joint Genome Institute"/>
            <person name="Lucas S."/>
            <person name="Copeland A."/>
            <person name="Lapidus A."/>
            <person name="Glavina del Rio T."/>
            <person name="Tice H."/>
            <person name="Bruce D."/>
            <person name="Goodwin L."/>
            <person name="Pitluck S."/>
            <person name="Chertkov O."/>
            <person name="Brettin T."/>
            <person name="Detter J.C."/>
            <person name="Han C."/>
            <person name="Larimer F."/>
            <person name="Land M."/>
            <person name="Hauser L."/>
            <person name="Kyrpides N."/>
            <person name="Mikhailova N."/>
            <person name="Spring S."/>
            <person name="Beller H."/>
        </authorList>
    </citation>
    <scope>NUCLEOTIDE SEQUENCE [LARGE SCALE GENOMIC DNA]</scope>
    <source>
        <strain>DSM 9187 / NBRC 110442 / TA 4</strain>
    </source>
</reference>
<keyword id="KW-0997">Cell inner membrane</keyword>
<keyword id="KW-1003">Cell membrane</keyword>
<keyword id="KW-0143">Chaperone</keyword>
<keyword id="KW-0472">Membrane</keyword>
<keyword id="KW-0653">Protein transport</keyword>
<keyword id="KW-1185">Reference proteome</keyword>
<keyword id="KW-0812">Transmembrane</keyword>
<keyword id="KW-1133">Transmembrane helix</keyword>
<keyword id="KW-0813">Transport</keyword>